<protein>
    <recommendedName>
        <fullName evidence="1">Large ribosomal subunit protein bL36</fullName>
    </recommendedName>
    <alternativeName>
        <fullName evidence="2">50S ribosomal protein L36</fullName>
    </alternativeName>
</protein>
<comment type="similarity">
    <text evidence="1">Belongs to the bacterial ribosomal protein bL36 family.</text>
</comment>
<gene>
    <name evidence="1" type="primary">rpmJ</name>
    <name type="ordered locus">BA_0134</name>
    <name type="ordered locus">GBAA_0134</name>
    <name type="ordered locus">BAS0134</name>
</gene>
<name>RL36_BACAN</name>
<accession>Q81VQ6</accession>
<accession>Q6I4R0</accession>
<accession>Q6KYF6</accession>
<sequence>MKVRPSVKPICEKCKVIRRRGKVMVICENPKHKQKQG</sequence>
<reference key="1">
    <citation type="journal article" date="2003" name="Nature">
        <title>The genome sequence of Bacillus anthracis Ames and comparison to closely related bacteria.</title>
        <authorList>
            <person name="Read T.D."/>
            <person name="Peterson S.N."/>
            <person name="Tourasse N.J."/>
            <person name="Baillie L.W."/>
            <person name="Paulsen I.T."/>
            <person name="Nelson K.E."/>
            <person name="Tettelin H."/>
            <person name="Fouts D.E."/>
            <person name="Eisen J.A."/>
            <person name="Gill S.R."/>
            <person name="Holtzapple E.K."/>
            <person name="Okstad O.A."/>
            <person name="Helgason E."/>
            <person name="Rilstone J."/>
            <person name="Wu M."/>
            <person name="Kolonay J.F."/>
            <person name="Beanan M.J."/>
            <person name="Dodson R.J."/>
            <person name="Brinkac L.M."/>
            <person name="Gwinn M.L."/>
            <person name="DeBoy R.T."/>
            <person name="Madpu R."/>
            <person name="Daugherty S.C."/>
            <person name="Durkin A.S."/>
            <person name="Haft D.H."/>
            <person name="Nelson W.C."/>
            <person name="Peterson J.D."/>
            <person name="Pop M."/>
            <person name="Khouri H.M."/>
            <person name="Radune D."/>
            <person name="Benton J.L."/>
            <person name="Mahamoud Y."/>
            <person name="Jiang L."/>
            <person name="Hance I.R."/>
            <person name="Weidman J.F."/>
            <person name="Berry K.J."/>
            <person name="Plaut R.D."/>
            <person name="Wolf A.M."/>
            <person name="Watkins K.L."/>
            <person name="Nierman W.C."/>
            <person name="Hazen A."/>
            <person name="Cline R.T."/>
            <person name="Redmond C."/>
            <person name="Thwaite J.E."/>
            <person name="White O."/>
            <person name="Salzberg S.L."/>
            <person name="Thomason B."/>
            <person name="Friedlander A.M."/>
            <person name="Koehler T.M."/>
            <person name="Hanna P.C."/>
            <person name="Kolstoe A.-B."/>
            <person name="Fraser C.M."/>
        </authorList>
    </citation>
    <scope>NUCLEOTIDE SEQUENCE [LARGE SCALE GENOMIC DNA]</scope>
    <source>
        <strain>Ames / isolate Porton</strain>
    </source>
</reference>
<reference key="2">
    <citation type="journal article" date="2009" name="J. Bacteriol.">
        <title>The complete genome sequence of Bacillus anthracis Ames 'Ancestor'.</title>
        <authorList>
            <person name="Ravel J."/>
            <person name="Jiang L."/>
            <person name="Stanley S.T."/>
            <person name="Wilson M.R."/>
            <person name="Decker R.S."/>
            <person name="Read T.D."/>
            <person name="Worsham P."/>
            <person name="Keim P.S."/>
            <person name="Salzberg S.L."/>
            <person name="Fraser-Liggett C.M."/>
            <person name="Rasko D.A."/>
        </authorList>
    </citation>
    <scope>NUCLEOTIDE SEQUENCE [LARGE SCALE GENOMIC DNA]</scope>
    <source>
        <strain>Ames ancestor</strain>
    </source>
</reference>
<reference key="3">
    <citation type="submission" date="2004-01" db="EMBL/GenBank/DDBJ databases">
        <title>Complete genome sequence of Bacillus anthracis Sterne.</title>
        <authorList>
            <person name="Brettin T.S."/>
            <person name="Bruce D."/>
            <person name="Challacombe J.F."/>
            <person name="Gilna P."/>
            <person name="Han C."/>
            <person name="Hill K."/>
            <person name="Hitchcock P."/>
            <person name="Jackson P."/>
            <person name="Keim P."/>
            <person name="Longmire J."/>
            <person name="Lucas S."/>
            <person name="Okinaka R."/>
            <person name="Richardson P."/>
            <person name="Rubin E."/>
            <person name="Tice H."/>
        </authorList>
    </citation>
    <scope>NUCLEOTIDE SEQUENCE [LARGE SCALE GENOMIC DNA]</scope>
    <source>
        <strain>Sterne</strain>
    </source>
</reference>
<feature type="chain" id="PRO_0000126142" description="Large ribosomal subunit protein bL36">
    <location>
        <begin position="1"/>
        <end position="37"/>
    </location>
</feature>
<dbReference type="EMBL" id="AE016879">
    <property type="protein sequence ID" value="AAP24188.1"/>
    <property type="molecule type" value="Genomic_DNA"/>
</dbReference>
<dbReference type="EMBL" id="AE017334">
    <property type="protein sequence ID" value="AAT29214.1"/>
    <property type="molecule type" value="Genomic_DNA"/>
</dbReference>
<dbReference type="EMBL" id="AE017225">
    <property type="protein sequence ID" value="AAT52471.1"/>
    <property type="molecule type" value="Genomic_DNA"/>
</dbReference>
<dbReference type="RefSeq" id="NP_842702.1">
    <property type="nucleotide sequence ID" value="NC_003997.3"/>
</dbReference>
<dbReference type="RefSeq" id="WP_000868344.1">
    <property type="nucleotide sequence ID" value="NZ_WXXJ01000051.1"/>
</dbReference>
<dbReference type="RefSeq" id="YP_026420.1">
    <property type="nucleotide sequence ID" value="NC_005945.1"/>
</dbReference>
<dbReference type="SMR" id="Q81VQ6"/>
<dbReference type="STRING" id="261594.GBAA_0134"/>
<dbReference type="DNASU" id="1087046"/>
<dbReference type="GeneID" id="97822099"/>
<dbReference type="KEGG" id="ban:BA_0134"/>
<dbReference type="KEGG" id="bar:GBAA_0134"/>
<dbReference type="KEGG" id="bat:BAS0134"/>
<dbReference type="PATRIC" id="fig|198094.11.peg.131"/>
<dbReference type="eggNOG" id="COG0257">
    <property type="taxonomic scope" value="Bacteria"/>
</dbReference>
<dbReference type="HOGENOM" id="CLU_135723_6_2_9"/>
<dbReference type="OrthoDB" id="9802520at2"/>
<dbReference type="Proteomes" id="UP000000427">
    <property type="component" value="Chromosome"/>
</dbReference>
<dbReference type="Proteomes" id="UP000000594">
    <property type="component" value="Chromosome"/>
</dbReference>
<dbReference type="GO" id="GO:0005737">
    <property type="term" value="C:cytoplasm"/>
    <property type="evidence" value="ECO:0007669"/>
    <property type="project" value="UniProtKB-ARBA"/>
</dbReference>
<dbReference type="GO" id="GO:1990904">
    <property type="term" value="C:ribonucleoprotein complex"/>
    <property type="evidence" value="ECO:0007669"/>
    <property type="project" value="UniProtKB-KW"/>
</dbReference>
<dbReference type="GO" id="GO:0005840">
    <property type="term" value="C:ribosome"/>
    <property type="evidence" value="ECO:0007669"/>
    <property type="project" value="UniProtKB-KW"/>
</dbReference>
<dbReference type="GO" id="GO:0003735">
    <property type="term" value="F:structural constituent of ribosome"/>
    <property type="evidence" value="ECO:0007669"/>
    <property type="project" value="InterPro"/>
</dbReference>
<dbReference type="GO" id="GO:0006412">
    <property type="term" value="P:translation"/>
    <property type="evidence" value="ECO:0007669"/>
    <property type="project" value="UniProtKB-UniRule"/>
</dbReference>
<dbReference type="HAMAP" id="MF_00251">
    <property type="entry name" value="Ribosomal_bL36"/>
    <property type="match status" value="1"/>
</dbReference>
<dbReference type="InterPro" id="IPR000473">
    <property type="entry name" value="Ribosomal_bL36"/>
</dbReference>
<dbReference type="InterPro" id="IPR035977">
    <property type="entry name" value="Ribosomal_bL36_sp"/>
</dbReference>
<dbReference type="NCBIfam" id="TIGR01022">
    <property type="entry name" value="rpmJ_bact"/>
    <property type="match status" value="1"/>
</dbReference>
<dbReference type="PANTHER" id="PTHR42888">
    <property type="entry name" value="50S RIBOSOMAL PROTEIN L36, CHLOROPLASTIC"/>
    <property type="match status" value="1"/>
</dbReference>
<dbReference type="PANTHER" id="PTHR42888:SF1">
    <property type="entry name" value="LARGE RIBOSOMAL SUBUNIT PROTEIN BL36C"/>
    <property type="match status" value="1"/>
</dbReference>
<dbReference type="Pfam" id="PF00444">
    <property type="entry name" value="Ribosomal_L36"/>
    <property type="match status" value="1"/>
</dbReference>
<dbReference type="SUPFAM" id="SSF57840">
    <property type="entry name" value="Ribosomal protein L36"/>
    <property type="match status" value="1"/>
</dbReference>
<dbReference type="PROSITE" id="PS00828">
    <property type="entry name" value="RIBOSOMAL_L36"/>
    <property type="match status" value="1"/>
</dbReference>
<evidence type="ECO:0000255" key="1">
    <source>
        <dbReference type="HAMAP-Rule" id="MF_00251"/>
    </source>
</evidence>
<evidence type="ECO:0000305" key="2"/>
<proteinExistence type="inferred from homology"/>
<organism>
    <name type="scientific">Bacillus anthracis</name>
    <dbReference type="NCBI Taxonomy" id="1392"/>
    <lineage>
        <taxon>Bacteria</taxon>
        <taxon>Bacillati</taxon>
        <taxon>Bacillota</taxon>
        <taxon>Bacilli</taxon>
        <taxon>Bacillales</taxon>
        <taxon>Bacillaceae</taxon>
        <taxon>Bacillus</taxon>
        <taxon>Bacillus cereus group</taxon>
    </lineage>
</organism>
<keyword id="KW-1185">Reference proteome</keyword>
<keyword id="KW-0687">Ribonucleoprotein</keyword>
<keyword id="KW-0689">Ribosomal protein</keyword>